<comment type="function">
    <text evidence="1">Protein S19 forms a complex with S13 that binds strongly to the 16S ribosomal RNA.</text>
</comment>
<comment type="similarity">
    <text evidence="1">Belongs to the universal ribosomal protein uS19 family.</text>
</comment>
<keyword id="KW-0687">Ribonucleoprotein</keyword>
<keyword id="KW-0689">Ribosomal protein</keyword>
<keyword id="KW-0694">RNA-binding</keyword>
<keyword id="KW-0699">rRNA-binding</keyword>
<gene>
    <name evidence="1" type="primary">rpsS</name>
    <name type="ordered locus">GWCH70_0115</name>
</gene>
<name>RS19_GEOSW</name>
<evidence type="ECO:0000255" key="1">
    <source>
        <dbReference type="HAMAP-Rule" id="MF_00531"/>
    </source>
</evidence>
<evidence type="ECO:0000305" key="2"/>
<proteinExistence type="inferred from homology"/>
<sequence>MGRSLKKGPFCDEHLMKKIEKLNETGQKQVIKTWSRRSTIFPQFVGHTIAVYDGRKHVPVYITEDMVGHKLGEFAPTRTFRGHAGDDKKTKR</sequence>
<reference key="1">
    <citation type="submission" date="2009-06" db="EMBL/GenBank/DDBJ databases">
        <title>Complete sequence of chromosome of Geopacillus sp. WCH70.</title>
        <authorList>
            <consortium name="US DOE Joint Genome Institute"/>
            <person name="Lucas S."/>
            <person name="Copeland A."/>
            <person name="Lapidus A."/>
            <person name="Glavina del Rio T."/>
            <person name="Dalin E."/>
            <person name="Tice H."/>
            <person name="Bruce D."/>
            <person name="Goodwin L."/>
            <person name="Pitluck S."/>
            <person name="Chertkov O."/>
            <person name="Brettin T."/>
            <person name="Detter J.C."/>
            <person name="Han C."/>
            <person name="Larimer F."/>
            <person name="Land M."/>
            <person name="Hauser L."/>
            <person name="Kyrpides N."/>
            <person name="Mikhailova N."/>
            <person name="Brumm P."/>
            <person name="Mead D.A."/>
            <person name="Richardson P."/>
        </authorList>
    </citation>
    <scope>NUCLEOTIDE SEQUENCE [LARGE SCALE GENOMIC DNA]</scope>
    <source>
        <strain>WCH70</strain>
    </source>
</reference>
<protein>
    <recommendedName>
        <fullName evidence="1">Small ribosomal subunit protein uS19</fullName>
    </recommendedName>
    <alternativeName>
        <fullName evidence="2">30S ribosomal protein S19</fullName>
    </alternativeName>
</protein>
<feature type="chain" id="PRO_1000211809" description="Small ribosomal subunit protein uS19">
    <location>
        <begin position="1"/>
        <end position="92"/>
    </location>
</feature>
<accession>C5D3S1</accession>
<organism>
    <name type="scientific">Geobacillus sp. (strain WCH70)</name>
    <dbReference type="NCBI Taxonomy" id="471223"/>
    <lineage>
        <taxon>Bacteria</taxon>
        <taxon>Bacillati</taxon>
        <taxon>Bacillota</taxon>
        <taxon>Bacilli</taxon>
        <taxon>Bacillales</taxon>
        <taxon>Anoxybacillaceae</taxon>
        <taxon>Geobacillus</taxon>
    </lineage>
</organism>
<dbReference type="EMBL" id="CP001638">
    <property type="protein sequence ID" value="ACS23055.1"/>
    <property type="molecule type" value="Genomic_DNA"/>
</dbReference>
<dbReference type="SMR" id="C5D3S1"/>
<dbReference type="STRING" id="471223.GWCH70_0115"/>
<dbReference type="KEGG" id="gwc:GWCH70_0115"/>
<dbReference type="eggNOG" id="COG0185">
    <property type="taxonomic scope" value="Bacteria"/>
</dbReference>
<dbReference type="HOGENOM" id="CLU_144911_0_1_9"/>
<dbReference type="OrthoDB" id="9797833at2"/>
<dbReference type="GO" id="GO:0005737">
    <property type="term" value="C:cytoplasm"/>
    <property type="evidence" value="ECO:0007669"/>
    <property type="project" value="UniProtKB-ARBA"/>
</dbReference>
<dbReference type="GO" id="GO:0015935">
    <property type="term" value="C:small ribosomal subunit"/>
    <property type="evidence" value="ECO:0007669"/>
    <property type="project" value="InterPro"/>
</dbReference>
<dbReference type="GO" id="GO:0019843">
    <property type="term" value="F:rRNA binding"/>
    <property type="evidence" value="ECO:0007669"/>
    <property type="project" value="UniProtKB-UniRule"/>
</dbReference>
<dbReference type="GO" id="GO:0003735">
    <property type="term" value="F:structural constituent of ribosome"/>
    <property type="evidence" value="ECO:0007669"/>
    <property type="project" value="InterPro"/>
</dbReference>
<dbReference type="GO" id="GO:0000028">
    <property type="term" value="P:ribosomal small subunit assembly"/>
    <property type="evidence" value="ECO:0007669"/>
    <property type="project" value="TreeGrafter"/>
</dbReference>
<dbReference type="GO" id="GO:0006412">
    <property type="term" value="P:translation"/>
    <property type="evidence" value="ECO:0007669"/>
    <property type="project" value="UniProtKB-UniRule"/>
</dbReference>
<dbReference type="FunFam" id="3.30.860.10:FF:000001">
    <property type="entry name" value="30S ribosomal protein S19"/>
    <property type="match status" value="1"/>
</dbReference>
<dbReference type="Gene3D" id="3.30.860.10">
    <property type="entry name" value="30s Ribosomal Protein S19, Chain A"/>
    <property type="match status" value="1"/>
</dbReference>
<dbReference type="HAMAP" id="MF_00531">
    <property type="entry name" value="Ribosomal_uS19"/>
    <property type="match status" value="1"/>
</dbReference>
<dbReference type="InterPro" id="IPR002222">
    <property type="entry name" value="Ribosomal_uS19"/>
</dbReference>
<dbReference type="InterPro" id="IPR005732">
    <property type="entry name" value="Ribosomal_uS19_bac-type"/>
</dbReference>
<dbReference type="InterPro" id="IPR020934">
    <property type="entry name" value="Ribosomal_uS19_CS"/>
</dbReference>
<dbReference type="InterPro" id="IPR023575">
    <property type="entry name" value="Ribosomal_uS19_SF"/>
</dbReference>
<dbReference type="NCBIfam" id="TIGR01050">
    <property type="entry name" value="rpsS_bact"/>
    <property type="match status" value="1"/>
</dbReference>
<dbReference type="PANTHER" id="PTHR11880">
    <property type="entry name" value="RIBOSOMAL PROTEIN S19P FAMILY MEMBER"/>
    <property type="match status" value="1"/>
</dbReference>
<dbReference type="PANTHER" id="PTHR11880:SF8">
    <property type="entry name" value="SMALL RIBOSOMAL SUBUNIT PROTEIN US19M"/>
    <property type="match status" value="1"/>
</dbReference>
<dbReference type="Pfam" id="PF00203">
    <property type="entry name" value="Ribosomal_S19"/>
    <property type="match status" value="1"/>
</dbReference>
<dbReference type="PIRSF" id="PIRSF002144">
    <property type="entry name" value="Ribosomal_S19"/>
    <property type="match status" value="1"/>
</dbReference>
<dbReference type="PRINTS" id="PR00975">
    <property type="entry name" value="RIBOSOMALS19"/>
</dbReference>
<dbReference type="SUPFAM" id="SSF54570">
    <property type="entry name" value="Ribosomal protein S19"/>
    <property type="match status" value="1"/>
</dbReference>
<dbReference type="PROSITE" id="PS00323">
    <property type="entry name" value="RIBOSOMAL_S19"/>
    <property type="match status" value="1"/>
</dbReference>